<proteinExistence type="evidence at transcript level"/>
<keyword id="KW-0325">Glycoprotein</keyword>
<keyword id="KW-0494">Milk protein</keyword>
<keyword id="KW-0597">Phosphoprotein</keyword>
<keyword id="KW-0964">Secreted</keyword>
<sequence length="122" mass="13208">VALINNQFLPYPYYAKPGAVRSPAQILQWQVLPNTVPAKSCQAQPTTLARHPHPRLSFMAIPPKKNQDKTDIPTINTIATVESTITPTTEAIVDTVATLEASSEVIESAPETNTDQVTSTVV</sequence>
<dbReference type="EMBL" id="U37503">
    <property type="protein sequence ID" value="AAC48661.1"/>
    <property type="molecule type" value="Genomic_DNA"/>
</dbReference>
<dbReference type="GlyCosmos" id="Q95239">
    <property type="glycosylation" value="7 sites, No reported glycans"/>
</dbReference>
<dbReference type="GO" id="GO:0005615">
    <property type="term" value="C:extracellular space"/>
    <property type="evidence" value="ECO:0007669"/>
    <property type="project" value="TreeGrafter"/>
</dbReference>
<dbReference type="GO" id="GO:0007595">
    <property type="term" value="P:lactation"/>
    <property type="evidence" value="ECO:0007669"/>
    <property type="project" value="TreeGrafter"/>
</dbReference>
<dbReference type="GO" id="GO:0050821">
    <property type="term" value="P:protein stabilization"/>
    <property type="evidence" value="ECO:0007669"/>
    <property type="project" value="TreeGrafter"/>
</dbReference>
<dbReference type="InterPro" id="IPR000117">
    <property type="entry name" value="Casein_kappa"/>
</dbReference>
<dbReference type="PANTHER" id="PTHR11470">
    <property type="entry name" value="KAPPA CASEIN"/>
    <property type="match status" value="1"/>
</dbReference>
<dbReference type="PANTHER" id="PTHR11470:SF2">
    <property type="entry name" value="KAPPA-CASEIN"/>
    <property type="match status" value="1"/>
</dbReference>
<dbReference type="Pfam" id="PF00997">
    <property type="entry name" value="Casein_kappa"/>
    <property type="match status" value="1"/>
</dbReference>
<protein>
    <recommendedName>
        <fullName>Kappa-casein</fullName>
    </recommendedName>
</protein>
<comment type="function">
    <text>Kappa-casein stabilizes micelle formation, preventing casein precipitation in milk.</text>
</comment>
<comment type="subcellular location">
    <subcellularLocation>
        <location>Secreted</location>
    </subcellularLocation>
</comment>
<comment type="tissue specificity">
    <text>Mammary gland specific. Secreted in milk.</text>
</comment>
<comment type="similarity">
    <text evidence="4">Belongs to the kappa-casein family.</text>
</comment>
<reference key="1">
    <citation type="journal article" date="1996" name="Mol. Phylogenet. Evol.">
        <title>K-casein gene phylogeny of higher ruminants (Pecora, Artiodactyla).</title>
        <authorList>
            <person name="Cronin M.A."/>
            <person name="Stuart R."/>
            <person name="Pierson B.J."/>
            <person name="Patton J.C."/>
        </authorList>
    </citation>
    <scope>NUCLEOTIDE SEQUENCE [GENOMIC DNA]</scope>
</reference>
<feature type="chain" id="PRO_0000144119" description="Kappa-casein">
    <location>
        <begin position="1" status="less than"/>
        <end position="122"/>
    </location>
</feature>
<feature type="site" description="Cleavage; by chymosin/rennin" evidence="1">
    <location>
        <begin position="58"/>
        <end position="59"/>
    </location>
</feature>
<feature type="modified residue" description="Phosphothreonine" evidence="2">
    <location>
        <position position="98"/>
    </location>
</feature>
<feature type="modified residue" description="Phosphoserine; alternate" evidence="2">
    <location>
        <position position="102"/>
    </location>
</feature>
<feature type="modified residue" description="Phosphoserine" evidence="3">
    <location>
        <position position="119"/>
    </location>
</feature>
<feature type="glycosylation site" description="O-linked (GalNAc...) threonine" evidence="2">
    <location>
        <position position="74"/>
    </location>
</feature>
<feature type="glycosylation site" description="O-linked (GalNAc...) threonine" evidence="2">
    <location>
        <position position="84"/>
    </location>
</feature>
<feature type="glycosylation site" description="O-linked (GalNAc...) threonine" evidence="2">
    <location>
        <position position="86"/>
    </location>
</feature>
<feature type="glycosylation site" description="O-linked (GalNAc...) threonine" evidence="2">
    <location>
        <position position="89"/>
    </location>
</feature>
<feature type="glycosylation site" description="O-linked (GalNAc...) threonine" evidence="2">
    <location>
        <position position="95"/>
    </location>
</feature>
<feature type="glycosylation site" description="O-linked (GalNAc...) serine; alternate" evidence="2">
    <location>
        <position position="102"/>
    </location>
</feature>
<feature type="glycosylation site" description="O-linked (GalNAc...) threonine" evidence="2">
    <location>
        <position position="118"/>
    </location>
</feature>
<feature type="non-terminal residue">
    <location>
        <position position="1"/>
    </location>
</feature>
<gene>
    <name type="primary">CSN3</name>
    <name type="synonym">CSN10</name>
    <name type="synonym">CSNK</name>
</gene>
<organism>
    <name type="scientific">Rangifer tarandus</name>
    <name type="common">Reindeer</name>
    <name type="synonym">Cervus tarandus</name>
    <dbReference type="NCBI Taxonomy" id="9870"/>
    <lineage>
        <taxon>Eukaryota</taxon>
        <taxon>Metazoa</taxon>
        <taxon>Chordata</taxon>
        <taxon>Craniata</taxon>
        <taxon>Vertebrata</taxon>
        <taxon>Euteleostomi</taxon>
        <taxon>Mammalia</taxon>
        <taxon>Eutheria</taxon>
        <taxon>Laurasiatheria</taxon>
        <taxon>Artiodactyla</taxon>
        <taxon>Ruminantia</taxon>
        <taxon>Pecora</taxon>
        <taxon>Cervidae</taxon>
        <taxon>Odocoileinae</taxon>
        <taxon>Rangifer</taxon>
    </lineage>
</organism>
<evidence type="ECO:0000250" key="1"/>
<evidence type="ECO:0000250" key="2">
    <source>
        <dbReference type="UniProtKB" id="P02668"/>
    </source>
</evidence>
<evidence type="ECO:0000250" key="3">
    <source>
        <dbReference type="UniProtKB" id="P02670"/>
    </source>
</evidence>
<evidence type="ECO:0000305" key="4"/>
<accession>Q95239</accession>
<name>CASK_RANTA</name>